<organism>
    <name type="scientific">Synechococcus sp. (strain ATCC 27144 / PCC 6301 / SAUG 1402/1)</name>
    <name type="common">Anacystis nidulans</name>
    <dbReference type="NCBI Taxonomy" id="269084"/>
    <lineage>
        <taxon>Bacteria</taxon>
        <taxon>Bacillati</taxon>
        <taxon>Cyanobacteriota</taxon>
        <taxon>Cyanophyceae</taxon>
        <taxon>Synechococcales</taxon>
        <taxon>Synechococcaceae</taxon>
        <taxon>Synechococcus</taxon>
    </lineage>
</organism>
<feature type="chain" id="PRO_0000225106" description="UDP-N-acetylglucosamine--N-acetylmuramyl-(pentapeptide) pyrophosphoryl-undecaprenol N-acetylglucosamine transferase">
    <location>
        <begin position="1"/>
        <end position="363"/>
    </location>
</feature>
<feature type="binding site" evidence="1">
    <location>
        <begin position="21"/>
        <end position="23"/>
    </location>
    <ligand>
        <name>UDP-N-acetyl-alpha-D-glucosamine</name>
        <dbReference type="ChEBI" id="CHEBI:57705"/>
    </ligand>
</feature>
<feature type="binding site" evidence="1">
    <location>
        <position position="129"/>
    </location>
    <ligand>
        <name>UDP-N-acetyl-alpha-D-glucosamine</name>
        <dbReference type="ChEBI" id="CHEBI:57705"/>
    </ligand>
</feature>
<feature type="binding site" evidence="1">
    <location>
        <position position="170"/>
    </location>
    <ligand>
        <name>UDP-N-acetyl-alpha-D-glucosamine</name>
        <dbReference type="ChEBI" id="CHEBI:57705"/>
    </ligand>
</feature>
<feature type="binding site" evidence="1">
    <location>
        <position position="196"/>
    </location>
    <ligand>
        <name>UDP-N-acetyl-alpha-D-glucosamine</name>
        <dbReference type="ChEBI" id="CHEBI:57705"/>
    </ligand>
</feature>
<feature type="binding site" evidence="1">
    <location>
        <position position="290"/>
    </location>
    <ligand>
        <name>UDP-N-acetyl-alpha-D-glucosamine</name>
        <dbReference type="ChEBI" id="CHEBI:57705"/>
    </ligand>
</feature>
<accession>Q5N140</accession>
<reference key="1">
    <citation type="journal article" date="2007" name="Photosyn. Res.">
        <title>Complete nucleotide sequence of the freshwater unicellular cyanobacterium Synechococcus elongatus PCC 6301 chromosome: gene content and organization.</title>
        <authorList>
            <person name="Sugita C."/>
            <person name="Ogata K."/>
            <person name="Shikata M."/>
            <person name="Jikuya H."/>
            <person name="Takano J."/>
            <person name="Furumichi M."/>
            <person name="Kanehisa M."/>
            <person name="Omata T."/>
            <person name="Sugiura M."/>
            <person name="Sugita M."/>
        </authorList>
    </citation>
    <scope>NUCLEOTIDE SEQUENCE [LARGE SCALE GENOMIC DNA]</scope>
    <source>
        <strain>ATCC 27144 / PCC 6301 / SAUG 1402/1</strain>
    </source>
</reference>
<keyword id="KW-0131">Cell cycle</keyword>
<keyword id="KW-0132">Cell division</keyword>
<keyword id="KW-0997">Cell inner membrane</keyword>
<keyword id="KW-1003">Cell membrane</keyword>
<keyword id="KW-0133">Cell shape</keyword>
<keyword id="KW-0961">Cell wall biogenesis/degradation</keyword>
<keyword id="KW-0328">Glycosyltransferase</keyword>
<keyword id="KW-0472">Membrane</keyword>
<keyword id="KW-0573">Peptidoglycan synthesis</keyword>
<keyword id="KW-0808">Transferase</keyword>
<proteinExistence type="inferred from homology"/>
<gene>
    <name evidence="1" type="primary">murG</name>
    <name type="ordered locus">syc1790_c</name>
</gene>
<name>MURG_SYNP6</name>
<dbReference type="EC" id="2.4.1.227" evidence="1"/>
<dbReference type="EMBL" id="AP008231">
    <property type="protein sequence ID" value="BAD79980.1"/>
    <property type="molecule type" value="Genomic_DNA"/>
</dbReference>
<dbReference type="SMR" id="Q5N140"/>
<dbReference type="CAZy" id="GT28">
    <property type="family name" value="Glycosyltransferase Family 28"/>
</dbReference>
<dbReference type="KEGG" id="syc:syc1790_c"/>
<dbReference type="eggNOG" id="COG0707">
    <property type="taxonomic scope" value="Bacteria"/>
</dbReference>
<dbReference type="UniPathway" id="UPA00219"/>
<dbReference type="Proteomes" id="UP000001175">
    <property type="component" value="Chromosome"/>
</dbReference>
<dbReference type="GO" id="GO:0005886">
    <property type="term" value="C:plasma membrane"/>
    <property type="evidence" value="ECO:0007669"/>
    <property type="project" value="UniProtKB-SubCell"/>
</dbReference>
<dbReference type="GO" id="GO:0051991">
    <property type="term" value="F:UDP-N-acetyl-D-glucosamine:N-acetylmuramoyl-L-alanyl-D-glutamyl-meso-2,6-diaminopimelyl-D-alanyl-D-alanine-diphosphoundecaprenol 4-beta-N-acetylglucosaminlytransferase activity"/>
    <property type="evidence" value="ECO:0007669"/>
    <property type="project" value="RHEA"/>
</dbReference>
<dbReference type="GO" id="GO:0050511">
    <property type="term" value="F:undecaprenyldiphospho-muramoylpentapeptide beta-N-acetylglucosaminyltransferase activity"/>
    <property type="evidence" value="ECO:0007669"/>
    <property type="project" value="UniProtKB-UniRule"/>
</dbReference>
<dbReference type="GO" id="GO:0005975">
    <property type="term" value="P:carbohydrate metabolic process"/>
    <property type="evidence" value="ECO:0007669"/>
    <property type="project" value="InterPro"/>
</dbReference>
<dbReference type="GO" id="GO:0051301">
    <property type="term" value="P:cell division"/>
    <property type="evidence" value="ECO:0007669"/>
    <property type="project" value="UniProtKB-KW"/>
</dbReference>
<dbReference type="GO" id="GO:0071555">
    <property type="term" value="P:cell wall organization"/>
    <property type="evidence" value="ECO:0007669"/>
    <property type="project" value="UniProtKB-KW"/>
</dbReference>
<dbReference type="GO" id="GO:0030259">
    <property type="term" value="P:lipid glycosylation"/>
    <property type="evidence" value="ECO:0007669"/>
    <property type="project" value="UniProtKB-UniRule"/>
</dbReference>
<dbReference type="GO" id="GO:0009252">
    <property type="term" value="P:peptidoglycan biosynthetic process"/>
    <property type="evidence" value="ECO:0007669"/>
    <property type="project" value="UniProtKB-UniRule"/>
</dbReference>
<dbReference type="GO" id="GO:0008360">
    <property type="term" value="P:regulation of cell shape"/>
    <property type="evidence" value="ECO:0007669"/>
    <property type="project" value="UniProtKB-KW"/>
</dbReference>
<dbReference type="CDD" id="cd03785">
    <property type="entry name" value="GT28_MurG"/>
    <property type="match status" value="1"/>
</dbReference>
<dbReference type="Gene3D" id="3.40.50.2000">
    <property type="entry name" value="Glycogen Phosphorylase B"/>
    <property type="match status" value="2"/>
</dbReference>
<dbReference type="HAMAP" id="MF_00033">
    <property type="entry name" value="MurG"/>
    <property type="match status" value="1"/>
</dbReference>
<dbReference type="InterPro" id="IPR006009">
    <property type="entry name" value="GlcNAc_MurG"/>
</dbReference>
<dbReference type="InterPro" id="IPR007235">
    <property type="entry name" value="Glyco_trans_28_C"/>
</dbReference>
<dbReference type="InterPro" id="IPR004276">
    <property type="entry name" value="GlycoTrans_28_N"/>
</dbReference>
<dbReference type="NCBIfam" id="TIGR01133">
    <property type="entry name" value="murG"/>
    <property type="match status" value="1"/>
</dbReference>
<dbReference type="PANTHER" id="PTHR21015:SF22">
    <property type="entry name" value="GLYCOSYLTRANSFERASE"/>
    <property type="match status" value="1"/>
</dbReference>
<dbReference type="PANTHER" id="PTHR21015">
    <property type="entry name" value="UDP-N-ACETYLGLUCOSAMINE--N-ACETYLMURAMYL-(PENTAPEPTIDE) PYROPHOSPHORYL-UNDECAPRENOL N-ACETYLGLUCOSAMINE TRANSFERASE 1"/>
    <property type="match status" value="1"/>
</dbReference>
<dbReference type="Pfam" id="PF04101">
    <property type="entry name" value="Glyco_tran_28_C"/>
    <property type="match status" value="1"/>
</dbReference>
<dbReference type="Pfam" id="PF03033">
    <property type="entry name" value="Glyco_transf_28"/>
    <property type="match status" value="1"/>
</dbReference>
<dbReference type="SUPFAM" id="SSF53756">
    <property type="entry name" value="UDP-Glycosyltransferase/glycogen phosphorylase"/>
    <property type="match status" value="1"/>
</dbReference>
<comment type="function">
    <text evidence="1">Cell wall formation. Catalyzes the transfer of a GlcNAc subunit on undecaprenyl-pyrophosphoryl-MurNAc-pentapeptide (lipid intermediate I) to form undecaprenyl-pyrophosphoryl-MurNAc-(pentapeptide)GlcNAc (lipid intermediate II).</text>
</comment>
<comment type="catalytic activity">
    <reaction evidence="1">
        <text>di-trans,octa-cis-undecaprenyl diphospho-N-acetyl-alpha-D-muramoyl-L-alanyl-D-glutamyl-meso-2,6-diaminopimeloyl-D-alanyl-D-alanine + UDP-N-acetyl-alpha-D-glucosamine = di-trans,octa-cis-undecaprenyl diphospho-[N-acetyl-alpha-D-glucosaminyl-(1-&gt;4)]-N-acetyl-alpha-D-muramoyl-L-alanyl-D-glutamyl-meso-2,6-diaminopimeloyl-D-alanyl-D-alanine + UDP + H(+)</text>
        <dbReference type="Rhea" id="RHEA:31227"/>
        <dbReference type="ChEBI" id="CHEBI:15378"/>
        <dbReference type="ChEBI" id="CHEBI:57705"/>
        <dbReference type="ChEBI" id="CHEBI:58223"/>
        <dbReference type="ChEBI" id="CHEBI:61387"/>
        <dbReference type="ChEBI" id="CHEBI:61388"/>
        <dbReference type="EC" id="2.4.1.227"/>
    </reaction>
</comment>
<comment type="pathway">
    <text evidence="1">Cell wall biogenesis; peptidoglycan biosynthesis.</text>
</comment>
<comment type="subcellular location">
    <subcellularLocation>
        <location evidence="1">Cell inner membrane</location>
        <topology evidence="1">Peripheral membrane protein</topology>
        <orientation evidence="1">Cytoplasmic side</orientation>
    </subcellularLocation>
</comment>
<comment type="similarity">
    <text evidence="1">Belongs to the glycosyltransferase 28 family. MurG subfamily.</text>
</comment>
<sequence length="363" mass="38665">MSSGPRVSVAQPRLLFAASGTGGHVFPALAVAEALPEAKIDWLGVPDRLETQLVGDRYPLHTIRVGGFQGSWLLRPLTALRLIGAIFKVRRLLKRQQIEAVFTTGGYIAGPAIAAAWSLGIPVVLHESNALPGKTTRLLSRFCRRVALGFAEAGEYLPGRPLQVVGTPLRSQFYQPSQHGLPIPENVPVLLVMGGSQGAVAINRLVRAAAPAWLAAGLWIVHLTGQQDPDRGQLQHPQYIELSFVDNVAPLLNRADFSISRAGAGSLAELAAAGLPSLLIPYPFAAEDHQTFNARIFAKAGAAILAPQSELTVEQLQQQILDLLRARLGAAIANPLPKMAAAAGKLHVADSAEQVANLLRSLL</sequence>
<protein>
    <recommendedName>
        <fullName evidence="1">UDP-N-acetylglucosamine--N-acetylmuramyl-(pentapeptide) pyrophosphoryl-undecaprenol N-acetylglucosamine transferase</fullName>
        <ecNumber evidence="1">2.4.1.227</ecNumber>
    </recommendedName>
    <alternativeName>
        <fullName evidence="1">Undecaprenyl-PP-MurNAc-pentapeptide-UDPGlcNAc GlcNAc transferase</fullName>
    </alternativeName>
</protein>
<evidence type="ECO:0000255" key="1">
    <source>
        <dbReference type="HAMAP-Rule" id="MF_00033"/>
    </source>
</evidence>